<accession>Q1E1R7</accession>
<accession>J3KBS9</accession>
<reference key="1">
    <citation type="journal article" date="2009" name="Genome Res.">
        <title>Comparative genomic analyses of the human fungal pathogens Coccidioides and their relatives.</title>
        <authorList>
            <person name="Sharpton T.J."/>
            <person name="Stajich J.E."/>
            <person name="Rounsley S.D."/>
            <person name="Gardner M.J."/>
            <person name="Wortman J.R."/>
            <person name="Jordar V.S."/>
            <person name="Maiti R."/>
            <person name="Kodira C.D."/>
            <person name="Neafsey D.E."/>
            <person name="Zeng Q."/>
            <person name="Hung C.-Y."/>
            <person name="McMahan C."/>
            <person name="Muszewska A."/>
            <person name="Grynberg M."/>
            <person name="Mandel M.A."/>
            <person name="Kellner E.M."/>
            <person name="Barker B.M."/>
            <person name="Galgiani J.N."/>
            <person name="Orbach M.J."/>
            <person name="Kirkland T.N."/>
            <person name="Cole G.T."/>
            <person name="Henn M.R."/>
            <person name="Birren B.W."/>
            <person name="Taylor J.W."/>
        </authorList>
    </citation>
    <scope>NUCLEOTIDE SEQUENCE [LARGE SCALE GENOMIC DNA]</scope>
    <source>
        <strain>RS</strain>
    </source>
</reference>
<reference key="2">
    <citation type="journal article" date="2010" name="Genome Res.">
        <title>Population genomic sequencing of Coccidioides fungi reveals recent hybridization and transposon control.</title>
        <authorList>
            <person name="Neafsey D.E."/>
            <person name="Barker B.M."/>
            <person name="Sharpton T.J."/>
            <person name="Stajich J.E."/>
            <person name="Park D.J."/>
            <person name="Whiston E."/>
            <person name="Hung C.-Y."/>
            <person name="McMahan C."/>
            <person name="White J."/>
            <person name="Sykes S."/>
            <person name="Heiman D."/>
            <person name="Young S."/>
            <person name="Zeng Q."/>
            <person name="Abouelleil A."/>
            <person name="Aftuck L."/>
            <person name="Bessette D."/>
            <person name="Brown A."/>
            <person name="FitzGerald M."/>
            <person name="Lui A."/>
            <person name="Macdonald J.P."/>
            <person name="Priest M."/>
            <person name="Orbach M.J."/>
            <person name="Galgiani J.N."/>
            <person name="Kirkland T.N."/>
            <person name="Cole G.T."/>
            <person name="Birren B.W."/>
            <person name="Henn M.R."/>
            <person name="Taylor J.W."/>
            <person name="Rounsley S.D."/>
        </authorList>
    </citation>
    <scope>GENOME REANNOTATION</scope>
    <source>
        <strain>RS</strain>
    </source>
</reference>
<sequence>MASKKKERGPPPHSRSWQALTPPLSEWILDAVAAMGFTRMTPVQASTIPLFMGHKDVVVEAVTGSGKTMAFLIPVVEKLLRLEAPIKKHHVGAIIVSPTRELAEQIYKVLLSLLAFHAPSAAAIQPSTSDETADGETTLPSYPSSTLKVVPQLLLGGATTPAQDLSTFLKRSPNLFVSTPGRLLELLSSPHVHCPQTSFEVLVLDEADRLLDLGFKDDLQKTLARLPKQRRTGLFSATVSDAVDQIIRVGLRNPVKIAVKVKGAPGTEEKRTPASLQMTYLLTRPSHKIPAIRQILNSIDNTPQKTILYFSTCAAVDYWSHVLPSLLPEIFVTLPLHGKHPPNVRQKNFSRFTNSVSPSVLLTTDVAARGLDIPLVDLVIQFDPPTDPKAYLHRCGRAGRAGRRGLSVILLCPGREEDYIPFLEVRKTPVSLLESPPVALSDTLATEATSKIRETVLRDRALHDKAQKAFVSWVRSYTKHQSSSIFRITDIDWEEAGRAWGLLKLPKMPELQKFSGDRTLGVTLDWDKYSYKDKQREKHRQESLNSATTHNPLKRPAPSSSSNNDTAPWSKTLEKKSDKEKRRERKRAKKEREHWEKMTEEEKTKSRETHQMLEELRKKNRQELNAKSHTSSSVLSKPQEAELDGESEFEGFD</sequence>
<protein>
    <recommendedName>
        <fullName evidence="6">ATP-dependent rRNA helicase SPB4</fullName>
        <ecNumber evidence="1">3.6.4.13</ecNumber>
    </recommendedName>
</protein>
<evidence type="ECO:0000250" key="1">
    <source>
        <dbReference type="UniProtKB" id="P25808"/>
    </source>
</evidence>
<evidence type="ECO:0000255" key="2"/>
<evidence type="ECO:0000255" key="3">
    <source>
        <dbReference type="PROSITE-ProRule" id="PRU00541"/>
    </source>
</evidence>
<evidence type="ECO:0000255" key="4">
    <source>
        <dbReference type="PROSITE-ProRule" id="PRU00542"/>
    </source>
</evidence>
<evidence type="ECO:0000256" key="5">
    <source>
        <dbReference type="SAM" id="MobiDB-lite"/>
    </source>
</evidence>
<evidence type="ECO:0000305" key="6"/>
<gene>
    <name evidence="1" type="primary">SPB4</name>
    <name type="ORF">CIMG_03496</name>
</gene>
<comment type="function">
    <text evidence="1">ATP-binding RNA helicase involved in the biogenesis of 60S ribosomal subunits. Binds 90S pre-ribosomal particles and dissociates from pre-60S ribosomal particles after processing of 27SB pre-rRNA. Required for the normal formation of 18S rRNA through the processing of pre-rRNAs at sites A0, A1 and A2, and the normal formation of 25S and 5.8S rRNAs through the processing of pre-rRNAs at sites C1 and C2.</text>
</comment>
<comment type="catalytic activity">
    <reaction evidence="1">
        <text>ATP + H2O = ADP + phosphate + H(+)</text>
        <dbReference type="Rhea" id="RHEA:13065"/>
        <dbReference type="ChEBI" id="CHEBI:15377"/>
        <dbReference type="ChEBI" id="CHEBI:15378"/>
        <dbReference type="ChEBI" id="CHEBI:30616"/>
        <dbReference type="ChEBI" id="CHEBI:43474"/>
        <dbReference type="ChEBI" id="CHEBI:456216"/>
        <dbReference type="EC" id="3.6.4.13"/>
    </reaction>
</comment>
<comment type="subunit">
    <text evidence="1">Component of pre-60S ribosomal complexes.</text>
</comment>
<comment type="subcellular location">
    <subcellularLocation>
        <location evidence="1">Nucleus</location>
        <location evidence="1">Nucleolus</location>
    </subcellularLocation>
</comment>
<comment type="domain">
    <text>The Q motif is unique to and characteristic of the DEAD box family of RNA helicases and controls ATP binding and hydrolysis.</text>
</comment>
<comment type="similarity">
    <text evidence="6">Belongs to the DEAD box helicase family. DDX55/SPB4 subfamily.</text>
</comment>
<keyword id="KW-0067">ATP-binding</keyword>
<keyword id="KW-0175">Coiled coil</keyword>
<keyword id="KW-0347">Helicase</keyword>
<keyword id="KW-0378">Hydrolase</keyword>
<keyword id="KW-0547">Nucleotide-binding</keyword>
<keyword id="KW-0539">Nucleus</keyword>
<keyword id="KW-1185">Reference proteome</keyword>
<keyword id="KW-0690">Ribosome biogenesis</keyword>
<keyword id="KW-0694">RNA-binding</keyword>
<keyword id="KW-0698">rRNA processing</keyword>
<proteinExistence type="inferred from homology"/>
<organism>
    <name type="scientific">Coccidioides immitis (strain RS)</name>
    <name type="common">Valley fever fungus</name>
    <dbReference type="NCBI Taxonomy" id="246410"/>
    <lineage>
        <taxon>Eukaryota</taxon>
        <taxon>Fungi</taxon>
        <taxon>Dikarya</taxon>
        <taxon>Ascomycota</taxon>
        <taxon>Pezizomycotina</taxon>
        <taxon>Eurotiomycetes</taxon>
        <taxon>Eurotiomycetidae</taxon>
        <taxon>Onygenales</taxon>
        <taxon>Onygenaceae</taxon>
        <taxon>Coccidioides</taxon>
    </lineage>
</organism>
<feature type="chain" id="PRO_0000256049" description="ATP-dependent rRNA helicase SPB4">
    <location>
        <begin position="1"/>
        <end position="653"/>
    </location>
</feature>
<feature type="domain" description="Helicase ATP-binding" evidence="3">
    <location>
        <begin position="48"/>
        <end position="257"/>
    </location>
</feature>
<feature type="domain" description="Helicase C-terminal" evidence="4">
    <location>
        <begin position="291"/>
        <end position="444"/>
    </location>
</feature>
<feature type="region of interest" description="Disordered" evidence="5">
    <location>
        <begin position="534"/>
        <end position="653"/>
    </location>
</feature>
<feature type="coiled-coil region" evidence="2">
    <location>
        <begin position="571"/>
        <end position="627"/>
    </location>
</feature>
<feature type="short sequence motif" description="Q motif" evidence="6">
    <location>
        <begin position="17"/>
        <end position="45"/>
    </location>
</feature>
<feature type="short sequence motif" description="DEAD box" evidence="6">
    <location>
        <begin position="205"/>
        <end position="208"/>
    </location>
</feature>
<feature type="compositionally biased region" description="Polar residues" evidence="5">
    <location>
        <begin position="558"/>
        <end position="569"/>
    </location>
</feature>
<feature type="compositionally biased region" description="Basic and acidic residues" evidence="5">
    <location>
        <begin position="572"/>
        <end position="581"/>
    </location>
</feature>
<feature type="compositionally biased region" description="Basic and acidic residues" evidence="5">
    <location>
        <begin position="590"/>
        <end position="626"/>
    </location>
</feature>
<feature type="compositionally biased region" description="Polar residues" evidence="5">
    <location>
        <begin position="627"/>
        <end position="636"/>
    </location>
</feature>
<feature type="compositionally biased region" description="Acidic residues" evidence="5">
    <location>
        <begin position="641"/>
        <end position="653"/>
    </location>
</feature>
<feature type="binding site" evidence="3">
    <location>
        <begin position="61"/>
        <end position="68"/>
    </location>
    <ligand>
        <name>ATP</name>
        <dbReference type="ChEBI" id="CHEBI:30616"/>
    </ligand>
</feature>
<dbReference type="EC" id="3.6.4.13" evidence="1"/>
<dbReference type="EMBL" id="GG704916">
    <property type="protein sequence ID" value="EAS32472.3"/>
    <property type="molecule type" value="Genomic_DNA"/>
</dbReference>
<dbReference type="RefSeq" id="XP_001244055.2">
    <property type="nucleotide sequence ID" value="XM_001244054.2"/>
</dbReference>
<dbReference type="SMR" id="Q1E1R7"/>
<dbReference type="FunCoup" id="Q1E1R7">
    <property type="interactions" value="1138"/>
</dbReference>
<dbReference type="STRING" id="246410.Q1E1R7"/>
<dbReference type="GeneID" id="4564127"/>
<dbReference type="KEGG" id="cim:CIMG_03496"/>
<dbReference type="VEuPathDB" id="FungiDB:CIMG_03496"/>
<dbReference type="InParanoid" id="Q1E1R7"/>
<dbReference type="OMA" id="AYKEHEC"/>
<dbReference type="OrthoDB" id="7396459at2759"/>
<dbReference type="Proteomes" id="UP000001261">
    <property type="component" value="Unassembled WGS sequence"/>
</dbReference>
<dbReference type="GO" id="GO:0005730">
    <property type="term" value="C:nucleolus"/>
    <property type="evidence" value="ECO:0007669"/>
    <property type="project" value="UniProtKB-SubCell"/>
</dbReference>
<dbReference type="GO" id="GO:0005524">
    <property type="term" value="F:ATP binding"/>
    <property type="evidence" value="ECO:0007669"/>
    <property type="project" value="UniProtKB-KW"/>
</dbReference>
<dbReference type="GO" id="GO:0016887">
    <property type="term" value="F:ATP hydrolysis activity"/>
    <property type="evidence" value="ECO:0007669"/>
    <property type="project" value="RHEA"/>
</dbReference>
<dbReference type="GO" id="GO:0003723">
    <property type="term" value="F:RNA binding"/>
    <property type="evidence" value="ECO:0007669"/>
    <property type="project" value="UniProtKB-KW"/>
</dbReference>
<dbReference type="GO" id="GO:0003724">
    <property type="term" value="F:RNA helicase activity"/>
    <property type="evidence" value="ECO:0007669"/>
    <property type="project" value="UniProtKB-EC"/>
</dbReference>
<dbReference type="GO" id="GO:0006364">
    <property type="term" value="P:rRNA processing"/>
    <property type="evidence" value="ECO:0007669"/>
    <property type="project" value="UniProtKB-KW"/>
</dbReference>
<dbReference type="CDD" id="cd17960">
    <property type="entry name" value="DEADc_DDX55"/>
    <property type="match status" value="1"/>
</dbReference>
<dbReference type="CDD" id="cd18787">
    <property type="entry name" value="SF2_C_DEAD"/>
    <property type="match status" value="1"/>
</dbReference>
<dbReference type="Gene3D" id="3.40.50.300">
    <property type="entry name" value="P-loop containing nucleotide triphosphate hydrolases"/>
    <property type="match status" value="2"/>
</dbReference>
<dbReference type="InterPro" id="IPR056330">
    <property type="entry name" value="CTT_SPB4"/>
</dbReference>
<dbReference type="InterPro" id="IPR011545">
    <property type="entry name" value="DEAD/DEAH_box_helicase_dom"/>
</dbReference>
<dbReference type="InterPro" id="IPR014001">
    <property type="entry name" value="Helicase_ATP-bd"/>
</dbReference>
<dbReference type="InterPro" id="IPR001650">
    <property type="entry name" value="Helicase_C-like"/>
</dbReference>
<dbReference type="InterPro" id="IPR027417">
    <property type="entry name" value="P-loop_NTPase"/>
</dbReference>
<dbReference type="InterPro" id="IPR000629">
    <property type="entry name" value="RNA-helicase_DEAD-box_CS"/>
</dbReference>
<dbReference type="InterPro" id="IPR014014">
    <property type="entry name" value="RNA_helicase_DEAD_Q_motif"/>
</dbReference>
<dbReference type="InterPro" id="IPR025313">
    <property type="entry name" value="SPB4-like_CTE"/>
</dbReference>
<dbReference type="PANTHER" id="PTHR24031">
    <property type="entry name" value="RNA HELICASE"/>
    <property type="match status" value="1"/>
</dbReference>
<dbReference type="Pfam" id="PF13959">
    <property type="entry name" value="CTE_SPB4"/>
    <property type="match status" value="1"/>
</dbReference>
<dbReference type="Pfam" id="PF23681">
    <property type="entry name" value="CTT_SPB4"/>
    <property type="match status" value="1"/>
</dbReference>
<dbReference type="Pfam" id="PF00270">
    <property type="entry name" value="DEAD"/>
    <property type="match status" value="1"/>
</dbReference>
<dbReference type="Pfam" id="PF00271">
    <property type="entry name" value="Helicase_C"/>
    <property type="match status" value="1"/>
</dbReference>
<dbReference type="SMART" id="SM00487">
    <property type="entry name" value="DEXDc"/>
    <property type="match status" value="1"/>
</dbReference>
<dbReference type="SMART" id="SM01178">
    <property type="entry name" value="DUF4217"/>
    <property type="match status" value="1"/>
</dbReference>
<dbReference type="SMART" id="SM00490">
    <property type="entry name" value="HELICc"/>
    <property type="match status" value="1"/>
</dbReference>
<dbReference type="SUPFAM" id="SSF52540">
    <property type="entry name" value="P-loop containing nucleoside triphosphate hydrolases"/>
    <property type="match status" value="2"/>
</dbReference>
<dbReference type="PROSITE" id="PS00039">
    <property type="entry name" value="DEAD_ATP_HELICASE"/>
    <property type="match status" value="1"/>
</dbReference>
<dbReference type="PROSITE" id="PS51192">
    <property type="entry name" value="HELICASE_ATP_BIND_1"/>
    <property type="match status" value="1"/>
</dbReference>
<dbReference type="PROSITE" id="PS51194">
    <property type="entry name" value="HELICASE_CTER"/>
    <property type="match status" value="1"/>
</dbReference>
<dbReference type="PROSITE" id="PS51195">
    <property type="entry name" value="Q_MOTIF"/>
    <property type="match status" value="1"/>
</dbReference>
<name>SPB4_COCIM</name>